<comment type="function">
    <text evidence="1">Involved in protein export. Acts as a chaperone by maintaining the newly synthesized protein in an open conformation. Functions as a peptidyl-prolyl cis-trans isomerase.</text>
</comment>
<comment type="catalytic activity">
    <reaction evidence="1">
        <text>[protein]-peptidylproline (omega=180) = [protein]-peptidylproline (omega=0)</text>
        <dbReference type="Rhea" id="RHEA:16237"/>
        <dbReference type="Rhea" id="RHEA-COMP:10747"/>
        <dbReference type="Rhea" id="RHEA-COMP:10748"/>
        <dbReference type="ChEBI" id="CHEBI:83833"/>
        <dbReference type="ChEBI" id="CHEBI:83834"/>
        <dbReference type="EC" id="5.2.1.8"/>
    </reaction>
</comment>
<comment type="subcellular location">
    <subcellularLocation>
        <location>Cytoplasm</location>
    </subcellularLocation>
    <text evidence="1">About half TF is bound to the ribosome near the polypeptide exit tunnel while the other half is free in the cytoplasm.</text>
</comment>
<comment type="domain">
    <text evidence="1">Consists of 3 domains; the N-terminus binds the ribosome, the middle domain has PPIase activity, while the C-terminus has intrinsic chaperone activity on its own.</text>
</comment>
<comment type="similarity">
    <text evidence="1">Belongs to the FKBP-type PPIase family. Tig subfamily.</text>
</comment>
<comment type="sequence caution" evidence="2">
    <conflict type="erroneous initiation">
        <sequence resource="EMBL-CDS" id="AAT87755"/>
    </conflict>
</comment>
<proteinExistence type="inferred from homology"/>
<keyword id="KW-0131">Cell cycle</keyword>
<keyword id="KW-0132">Cell division</keyword>
<keyword id="KW-0143">Chaperone</keyword>
<keyword id="KW-0963">Cytoplasm</keyword>
<keyword id="KW-0413">Isomerase</keyword>
<keyword id="KW-0697">Rotamase</keyword>
<feature type="chain" id="PRO_0000179442" description="Trigger factor">
    <location>
        <begin position="1"/>
        <end position="427"/>
    </location>
</feature>
<feature type="domain" description="PPIase FKBP-type" evidence="1">
    <location>
        <begin position="163"/>
        <end position="248"/>
    </location>
</feature>
<organism>
    <name type="scientific">Streptococcus pyogenes serotype M6 (strain ATCC BAA-946 / MGAS10394)</name>
    <dbReference type="NCBI Taxonomy" id="286636"/>
    <lineage>
        <taxon>Bacteria</taxon>
        <taxon>Bacillati</taxon>
        <taxon>Bacillota</taxon>
        <taxon>Bacilli</taxon>
        <taxon>Lactobacillales</taxon>
        <taxon>Streptococcaceae</taxon>
        <taxon>Streptococcus</taxon>
    </lineage>
</organism>
<reference key="1">
    <citation type="journal article" date="1998" name="EMBO J.">
        <title>A role for trigger factor and an rgg-like regulator in the transcription, secretion and processing of the cysteine proteinase of Streptococcus pyogenes.</title>
        <authorList>
            <person name="Lyon W.R."/>
            <person name="Gibson C.M."/>
            <person name="Caparon M.G."/>
        </authorList>
    </citation>
    <scope>NUCLEOTIDE SEQUENCE [GENOMIC DNA]</scope>
    <source>
        <strain>HSC5 / Serotype M6</strain>
    </source>
</reference>
<reference key="2">
    <citation type="journal article" date="2004" name="J. Infect. Dis.">
        <title>Progress toward characterization of the group A Streptococcus metagenome: complete genome sequence of a macrolide-resistant serotype M6 strain.</title>
        <authorList>
            <person name="Banks D.J."/>
            <person name="Porcella S.F."/>
            <person name="Barbian K.D."/>
            <person name="Beres S.B."/>
            <person name="Philips L.E."/>
            <person name="Voyich J.M."/>
            <person name="DeLeo F.R."/>
            <person name="Martin J.M."/>
            <person name="Somerville G.A."/>
            <person name="Musser J.M."/>
        </authorList>
    </citation>
    <scope>NUCLEOTIDE SEQUENCE [LARGE SCALE GENOMIC DNA]</scope>
    <source>
        <strain>ATCC BAA-946 / MGAS10394</strain>
    </source>
</reference>
<evidence type="ECO:0000255" key="1">
    <source>
        <dbReference type="HAMAP-Rule" id="MF_00303"/>
    </source>
</evidence>
<evidence type="ECO:0000305" key="2"/>
<name>TIG_STRP6</name>
<sequence>MSTSFENKATNRGVITFTISQDKIKPALDKAFNKIKKDLNAPGFRKGHMPRPVFNQKFGEEVLYEDALNIVLPEAYEAAVTELGLDVVAQPKIDVVSMEKGKEWTLSAEVVTKPEVKLGDYKNLVVEVDASKEVSDEDVDAKIERERQNLAELIIKDGEAAQGDTVVIDFVGSVDGVEFDGGKGDNFSLELGSGQFIPGFEDQLVGAKAGDEVEVNVTFPESYQAEDLAGKAAKFMTTIHEVKTKEVPELDDELAKDIDEDVDTLEDLKVKYRKELEAAQETAYDDAVEGAAIELAVANAEIVDLPEEMIHEEVNRSVNEFMGNMQRQGISPEMYFQLTGTTQEDLHNQYSAEADKRVKTNLVIEAIAKAEGFEATDSEIEQEINDLATEYNMPADQVRSLLSADMLKHDIAMKKAVEVITSTASVK</sequence>
<accession>Q5XA08</accession>
<accession>O85730</accession>
<dbReference type="EC" id="5.2.1.8" evidence="1"/>
<dbReference type="EMBL" id="AF073922">
    <property type="protein sequence ID" value="AAC82391.1"/>
    <property type="molecule type" value="Genomic_DNA"/>
</dbReference>
<dbReference type="EMBL" id="CP000003">
    <property type="protein sequence ID" value="AAT87755.1"/>
    <property type="status" value="ALT_INIT"/>
    <property type="molecule type" value="Genomic_DNA"/>
</dbReference>
<dbReference type="RefSeq" id="WP_011054989.1">
    <property type="nucleotide sequence ID" value="NC_006086.1"/>
</dbReference>
<dbReference type="SMR" id="Q5XA08"/>
<dbReference type="KEGG" id="spa:M6_Spy1620"/>
<dbReference type="HOGENOM" id="CLU_033058_3_2_9"/>
<dbReference type="Proteomes" id="UP000001167">
    <property type="component" value="Chromosome"/>
</dbReference>
<dbReference type="GO" id="GO:0005737">
    <property type="term" value="C:cytoplasm"/>
    <property type="evidence" value="ECO:0007669"/>
    <property type="project" value="UniProtKB-SubCell"/>
</dbReference>
<dbReference type="GO" id="GO:0003755">
    <property type="term" value="F:peptidyl-prolyl cis-trans isomerase activity"/>
    <property type="evidence" value="ECO:0007669"/>
    <property type="project" value="UniProtKB-UniRule"/>
</dbReference>
<dbReference type="GO" id="GO:0044183">
    <property type="term" value="F:protein folding chaperone"/>
    <property type="evidence" value="ECO:0007669"/>
    <property type="project" value="TreeGrafter"/>
</dbReference>
<dbReference type="GO" id="GO:0043022">
    <property type="term" value="F:ribosome binding"/>
    <property type="evidence" value="ECO:0007669"/>
    <property type="project" value="TreeGrafter"/>
</dbReference>
<dbReference type="GO" id="GO:0051083">
    <property type="term" value="P:'de novo' cotranslational protein folding"/>
    <property type="evidence" value="ECO:0007669"/>
    <property type="project" value="TreeGrafter"/>
</dbReference>
<dbReference type="GO" id="GO:0051301">
    <property type="term" value="P:cell division"/>
    <property type="evidence" value="ECO:0007669"/>
    <property type="project" value="UniProtKB-KW"/>
</dbReference>
<dbReference type="GO" id="GO:0061077">
    <property type="term" value="P:chaperone-mediated protein folding"/>
    <property type="evidence" value="ECO:0007669"/>
    <property type="project" value="TreeGrafter"/>
</dbReference>
<dbReference type="GO" id="GO:0015031">
    <property type="term" value="P:protein transport"/>
    <property type="evidence" value="ECO:0007669"/>
    <property type="project" value="UniProtKB-UniRule"/>
</dbReference>
<dbReference type="GO" id="GO:0043335">
    <property type="term" value="P:protein unfolding"/>
    <property type="evidence" value="ECO:0007669"/>
    <property type="project" value="TreeGrafter"/>
</dbReference>
<dbReference type="FunFam" id="3.10.50.40:FF:000001">
    <property type="entry name" value="Trigger factor"/>
    <property type="match status" value="1"/>
</dbReference>
<dbReference type="Gene3D" id="3.10.50.40">
    <property type="match status" value="1"/>
</dbReference>
<dbReference type="Gene3D" id="3.30.70.1050">
    <property type="entry name" value="Trigger factor ribosome-binding domain"/>
    <property type="match status" value="1"/>
</dbReference>
<dbReference type="Gene3D" id="1.10.3120.10">
    <property type="entry name" value="Trigger factor, C-terminal domain"/>
    <property type="match status" value="1"/>
</dbReference>
<dbReference type="HAMAP" id="MF_00303">
    <property type="entry name" value="Trigger_factor_Tig"/>
    <property type="match status" value="1"/>
</dbReference>
<dbReference type="InterPro" id="IPR046357">
    <property type="entry name" value="PPIase_dom_sf"/>
</dbReference>
<dbReference type="InterPro" id="IPR001179">
    <property type="entry name" value="PPIase_FKBP_dom"/>
</dbReference>
<dbReference type="InterPro" id="IPR005215">
    <property type="entry name" value="Trig_fac"/>
</dbReference>
<dbReference type="InterPro" id="IPR008880">
    <property type="entry name" value="Trigger_fac_C"/>
</dbReference>
<dbReference type="InterPro" id="IPR037041">
    <property type="entry name" value="Trigger_fac_C_sf"/>
</dbReference>
<dbReference type="InterPro" id="IPR008881">
    <property type="entry name" value="Trigger_fac_ribosome-bd_bac"/>
</dbReference>
<dbReference type="InterPro" id="IPR036611">
    <property type="entry name" value="Trigger_fac_ribosome-bd_sf"/>
</dbReference>
<dbReference type="InterPro" id="IPR027304">
    <property type="entry name" value="Trigger_fact/SurA_dom_sf"/>
</dbReference>
<dbReference type="NCBIfam" id="TIGR00115">
    <property type="entry name" value="tig"/>
    <property type="match status" value="1"/>
</dbReference>
<dbReference type="PANTHER" id="PTHR30560">
    <property type="entry name" value="TRIGGER FACTOR CHAPERONE AND PEPTIDYL-PROLYL CIS/TRANS ISOMERASE"/>
    <property type="match status" value="1"/>
</dbReference>
<dbReference type="PANTHER" id="PTHR30560:SF3">
    <property type="entry name" value="TRIGGER FACTOR-LIKE PROTEIN TIG, CHLOROPLASTIC"/>
    <property type="match status" value="1"/>
</dbReference>
<dbReference type="Pfam" id="PF00254">
    <property type="entry name" value="FKBP_C"/>
    <property type="match status" value="1"/>
</dbReference>
<dbReference type="Pfam" id="PF05698">
    <property type="entry name" value="Trigger_C"/>
    <property type="match status" value="1"/>
</dbReference>
<dbReference type="Pfam" id="PF05697">
    <property type="entry name" value="Trigger_N"/>
    <property type="match status" value="1"/>
</dbReference>
<dbReference type="PIRSF" id="PIRSF003095">
    <property type="entry name" value="Trigger_factor"/>
    <property type="match status" value="1"/>
</dbReference>
<dbReference type="SUPFAM" id="SSF54534">
    <property type="entry name" value="FKBP-like"/>
    <property type="match status" value="1"/>
</dbReference>
<dbReference type="SUPFAM" id="SSF109998">
    <property type="entry name" value="Triger factor/SurA peptide-binding domain-like"/>
    <property type="match status" value="1"/>
</dbReference>
<dbReference type="SUPFAM" id="SSF102735">
    <property type="entry name" value="Trigger factor ribosome-binding domain"/>
    <property type="match status" value="1"/>
</dbReference>
<dbReference type="PROSITE" id="PS50059">
    <property type="entry name" value="FKBP_PPIASE"/>
    <property type="match status" value="1"/>
</dbReference>
<gene>
    <name evidence="1" type="primary">tig</name>
    <name type="ordered locus">M6_Spy1620</name>
</gene>
<protein>
    <recommendedName>
        <fullName evidence="1">Trigger factor</fullName>
        <shortName evidence="1">TF</shortName>
        <ecNumber evidence="1">5.2.1.8</ecNumber>
    </recommendedName>
    <alternativeName>
        <fullName evidence="1">PPIase</fullName>
    </alternativeName>
</protein>